<proteinExistence type="inferred from homology"/>
<feature type="signal peptide" evidence="1">
    <location>
        <begin position="1"/>
        <end position="33"/>
    </location>
</feature>
<feature type="chain" id="PRO_0000314424" description="D-(-)-3-hydroxybutyrate oligomer hydrolase">
    <location>
        <begin position="34"/>
        <end position="699"/>
    </location>
</feature>
<feature type="active site" description="Charge relay system" evidence="1">
    <location>
        <position position="311"/>
    </location>
</feature>
<evidence type="ECO:0000255" key="1">
    <source>
        <dbReference type="HAMAP-Rule" id="MF_01906"/>
    </source>
</evidence>
<keyword id="KW-0378">Hydrolase</keyword>
<keyword id="KW-0964">Secreted</keyword>
<keyword id="KW-0732">Signal</keyword>
<organism>
    <name type="scientific">Burkholderia pseudomallei (strain 668)</name>
    <dbReference type="NCBI Taxonomy" id="320373"/>
    <lineage>
        <taxon>Bacteria</taxon>
        <taxon>Pseudomonadati</taxon>
        <taxon>Pseudomonadota</taxon>
        <taxon>Betaproteobacteria</taxon>
        <taxon>Burkholderiales</taxon>
        <taxon>Burkholderiaceae</taxon>
        <taxon>Burkholderia</taxon>
        <taxon>pseudomallei group</taxon>
    </lineage>
</organism>
<gene>
    <name type="ordered locus">BURPS668_3147</name>
</gene>
<dbReference type="EC" id="3.1.1.22" evidence="1"/>
<dbReference type="EMBL" id="CP000570">
    <property type="protein sequence ID" value="ABN83540.1"/>
    <property type="molecule type" value="Genomic_DNA"/>
</dbReference>
<dbReference type="RefSeq" id="WP_004532230.1">
    <property type="nucleotide sequence ID" value="NC_009074.1"/>
</dbReference>
<dbReference type="ESTHER" id="burps-hboh">
    <property type="family name" value="OHBut_olig_hydro_put"/>
</dbReference>
<dbReference type="KEGG" id="bpd:BURPS668_3147"/>
<dbReference type="HOGENOM" id="CLU_420258_0_0_4"/>
<dbReference type="UniPathway" id="UPA00863"/>
<dbReference type="GO" id="GO:0005615">
    <property type="term" value="C:extracellular space"/>
    <property type="evidence" value="ECO:0007669"/>
    <property type="project" value="InterPro"/>
</dbReference>
<dbReference type="GO" id="GO:0047989">
    <property type="term" value="F:hydroxybutyrate-dimer hydrolase activity"/>
    <property type="evidence" value="ECO:0007669"/>
    <property type="project" value="UniProtKB-UniRule"/>
</dbReference>
<dbReference type="GO" id="GO:0019605">
    <property type="term" value="P:butyrate metabolic process"/>
    <property type="evidence" value="ECO:0007669"/>
    <property type="project" value="UniProtKB-UniRule"/>
</dbReference>
<dbReference type="HAMAP" id="MF_01906">
    <property type="entry name" value="3HBOH"/>
    <property type="match status" value="1"/>
</dbReference>
<dbReference type="InterPro" id="IPR029058">
    <property type="entry name" value="AB_hydrolase_fold"/>
</dbReference>
<dbReference type="InterPro" id="IPR016582">
    <property type="entry name" value="OHBut_olig_hydro_put"/>
</dbReference>
<dbReference type="Pfam" id="PF10605">
    <property type="entry name" value="3HBOH"/>
    <property type="match status" value="1"/>
</dbReference>
<dbReference type="PIRSF" id="PIRSF011409">
    <property type="entry name" value="HObutyrate_olig_hydrol"/>
    <property type="match status" value="1"/>
</dbReference>
<dbReference type="SUPFAM" id="SSF53474">
    <property type="entry name" value="alpha/beta-Hydrolases"/>
    <property type="match status" value="1"/>
</dbReference>
<accession>A3NCT8</accession>
<sequence length="699" mass="71678">MTAIRGGSRRAPGLALALLGGVLLGACHGDENAQVNALPGFVSGSVRKTAYDGASDDLLTAGLGKTGLGSDTRPGFANPAQPSAAELRRLAIYSNYRALVDITPNGGYGRFWGPNVDLAGNDTLGEGKIAGTEYLAYSDDGSGRKNVTLLVQVPASFDPANPCIVTATASGSRGVYGAIAAAGEWGLKRGCAVAYNDKGGGNGAHEIGTGVVTLIDGTLATASSAGSSSLFTASESSSTLAAFNSAFPNRYAYKHAHSQQNPEQDWGRVTLQAVEFAYWALNEQFGPVVDGTRHGIRYRPGDITTIAASVSNGGGSALAAAEQDTRGWITAVVVGEPQINVRMTPGVTVEQGGAPVPSFGRPLADYATLANLLQPCAAAAVAATGAPYLSALPMGVTQSIRTQRCATLAAAGLVSGADTASQASDALAQLHAAGYLADSDLLQAPMWDSQAMPAIAVTYANAYTRSRVTDNLCNFSFATTNPVTGAVAAPAVSPMTNLFGAGNGVPPTNGINLVFNGASGGVDHRLATPDASFAGAFCLRQLWTANQLGIGTNVDAVRVAANLQHKPAIIVHGRSDALVPVNHASRAYVAQNSATEGRASQLSFYEVTNGQHFDAFLSVPGFDTRFVPVHYYDEQALNLMWNHLKSGAPLPPSQVIRTVPRGGVPGAAPALSTANLPPIVQSPGANAIAVNAGVIDVPL</sequence>
<protein>
    <recommendedName>
        <fullName evidence="1">D-(-)-3-hydroxybutyrate oligomer hydrolase</fullName>
        <shortName evidence="1">3HB-oligomer hydrolase</shortName>
        <shortName evidence="1">3HBOH</shortName>
        <ecNumber evidence="1">3.1.1.22</ecNumber>
    </recommendedName>
</protein>
<reference key="1">
    <citation type="journal article" date="2010" name="Genome Biol. Evol.">
        <title>Continuing evolution of Burkholderia mallei through genome reduction and large-scale rearrangements.</title>
        <authorList>
            <person name="Losada L."/>
            <person name="Ronning C.M."/>
            <person name="DeShazer D."/>
            <person name="Woods D."/>
            <person name="Fedorova N."/>
            <person name="Kim H.S."/>
            <person name="Shabalina S.A."/>
            <person name="Pearson T.R."/>
            <person name="Brinkac L."/>
            <person name="Tan P."/>
            <person name="Nandi T."/>
            <person name="Crabtree J."/>
            <person name="Badger J."/>
            <person name="Beckstrom-Sternberg S."/>
            <person name="Saqib M."/>
            <person name="Schutzer S.E."/>
            <person name="Keim P."/>
            <person name="Nierman W.C."/>
        </authorList>
    </citation>
    <scope>NUCLEOTIDE SEQUENCE [LARGE SCALE GENOMIC DNA]</scope>
    <source>
        <strain>668</strain>
    </source>
</reference>
<comment type="function">
    <text evidence="1">Participates in the degradation of poly-3-hydroxybutyrate (PHB). It works downstream of poly(3-hydroxybutyrate) depolymerase, hydrolyzing D(-)-3-hydroxybutyrate oligomers of various length (3HB-oligomers) into 3HB-monomers.</text>
</comment>
<comment type="catalytic activity">
    <reaction evidence="1">
        <text>(3R)-hydroxybutanoate dimer + H2O = 2 (R)-3-hydroxybutanoate + H(+)</text>
        <dbReference type="Rhea" id="RHEA:10172"/>
        <dbReference type="ChEBI" id="CHEBI:10979"/>
        <dbReference type="ChEBI" id="CHEBI:10983"/>
        <dbReference type="ChEBI" id="CHEBI:15377"/>
        <dbReference type="ChEBI" id="CHEBI:15378"/>
        <dbReference type="EC" id="3.1.1.22"/>
    </reaction>
</comment>
<comment type="pathway">
    <text evidence="1">Lipid metabolism; butanoate metabolism.</text>
</comment>
<comment type="subcellular location">
    <subcellularLocation>
        <location evidence="1">Secreted</location>
    </subcellularLocation>
</comment>
<comment type="similarity">
    <text evidence="1">Belongs to the D-(-)-3-hydroxybutyrate oligomer hydrolase family.</text>
</comment>
<name>HBOH_BURP6</name>